<name>LYTH_STAAS</name>
<comment type="function">
    <text evidence="1">Probably involved in cell-wall metabolism.</text>
</comment>
<comment type="subcellular location">
    <subcellularLocation>
        <location evidence="5">Secreted</location>
    </subcellularLocation>
</comment>
<comment type="similarity">
    <text evidence="5">Belongs to the N-acetylmuramoyl-L-alanine amidase 3 family.</text>
</comment>
<keyword id="KW-0961">Cell wall biogenesis/degradation</keyword>
<keyword id="KW-0378">Hydrolase</keyword>
<keyword id="KW-0964">Secreted</keyword>
<keyword id="KW-0732">Signal</keyword>
<accession>Q6G8T7</accession>
<protein>
    <recommendedName>
        <fullName>Probable cell wall amidase LytH</fullName>
        <ecNumber>3.5.1.-</ecNumber>
    </recommendedName>
</protein>
<feature type="signal peptide" evidence="2">
    <location>
        <begin position="1"/>
        <end position="40"/>
    </location>
</feature>
<feature type="chain" id="PRO_0000226284" description="Probable cell wall amidase LytH">
    <location>
        <begin position="41"/>
        <end position="291"/>
    </location>
</feature>
<feature type="domain" description="SH3b" evidence="3">
    <location>
        <begin position="41"/>
        <end position="105"/>
    </location>
</feature>
<feature type="domain" description="MurNAc-LAA" evidence="2">
    <location>
        <begin position="122"/>
        <end position="286"/>
    </location>
</feature>
<feature type="region of interest" description="Disordered" evidence="4">
    <location>
        <begin position="118"/>
        <end position="140"/>
    </location>
</feature>
<sequence>MKKIEAWLSKKGLKNKRTLIVVIAFVLFIIFLFLLLNSNSEDSGNITITENAELRTGPNAAYPVIYKVEKGDHFKKIGKVGKWIEVEDTSSNEKGWIAGWHTNLDIVADNTKEKNPLQGKTIVLDPGHGGSDQGASSNTKYKSLEKDYTLKTAKELQRTLEKEGATVKMTRTDDTYVSLENRDIKGDAYLSIHNDALESSNANGMTVYWYHDNQRALADTLDATIQKKGLLSNRGSRQENYQVLRQTKVPAVLLELGYISNPTDETMIKDQLHRQILEQAIVDGLKIYFSA</sequence>
<evidence type="ECO:0000250" key="1"/>
<evidence type="ECO:0000255" key="2"/>
<evidence type="ECO:0000255" key="3">
    <source>
        <dbReference type="PROSITE-ProRule" id="PRU01117"/>
    </source>
</evidence>
<evidence type="ECO:0000256" key="4">
    <source>
        <dbReference type="SAM" id="MobiDB-lite"/>
    </source>
</evidence>
<evidence type="ECO:0000305" key="5"/>
<dbReference type="EC" id="3.5.1.-"/>
<dbReference type="EMBL" id="BX571857">
    <property type="protein sequence ID" value="CAG43369.1"/>
    <property type="molecule type" value="Genomic_DNA"/>
</dbReference>
<dbReference type="RefSeq" id="WP_000717800.1">
    <property type="nucleotide sequence ID" value="NC_002953.3"/>
</dbReference>
<dbReference type="SMR" id="Q6G8T7"/>
<dbReference type="KEGG" id="sas:SAS1568"/>
<dbReference type="HOGENOM" id="CLU_014322_1_1_9"/>
<dbReference type="GO" id="GO:0005576">
    <property type="term" value="C:extracellular region"/>
    <property type="evidence" value="ECO:0007669"/>
    <property type="project" value="UniProtKB-SubCell"/>
</dbReference>
<dbReference type="GO" id="GO:0030288">
    <property type="term" value="C:outer membrane-bounded periplasmic space"/>
    <property type="evidence" value="ECO:0007669"/>
    <property type="project" value="TreeGrafter"/>
</dbReference>
<dbReference type="GO" id="GO:0008745">
    <property type="term" value="F:N-acetylmuramoyl-L-alanine amidase activity"/>
    <property type="evidence" value="ECO:0007669"/>
    <property type="project" value="InterPro"/>
</dbReference>
<dbReference type="GO" id="GO:0071555">
    <property type="term" value="P:cell wall organization"/>
    <property type="evidence" value="ECO:0007669"/>
    <property type="project" value="UniProtKB-KW"/>
</dbReference>
<dbReference type="GO" id="GO:0009253">
    <property type="term" value="P:peptidoglycan catabolic process"/>
    <property type="evidence" value="ECO:0007669"/>
    <property type="project" value="InterPro"/>
</dbReference>
<dbReference type="CDD" id="cd02696">
    <property type="entry name" value="MurNAc-LAA"/>
    <property type="match status" value="1"/>
</dbReference>
<dbReference type="Gene3D" id="2.30.30.40">
    <property type="entry name" value="SH3 Domains"/>
    <property type="match status" value="1"/>
</dbReference>
<dbReference type="Gene3D" id="3.40.630.40">
    <property type="entry name" value="Zn-dependent exopeptidases"/>
    <property type="match status" value="1"/>
</dbReference>
<dbReference type="InterPro" id="IPR017273">
    <property type="entry name" value="LytH"/>
</dbReference>
<dbReference type="InterPro" id="IPR002508">
    <property type="entry name" value="MurNAc-LAA_cat"/>
</dbReference>
<dbReference type="InterPro" id="IPR050695">
    <property type="entry name" value="N-acetylmuramoyl_amidase_3"/>
</dbReference>
<dbReference type="InterPro" id="IPR003646">
    <property type="entry name" value="SH3-like_bac-type"/>
</dbReference>
<dbReference type="PANTHER" id="PTHR30404:SF7">
    <property type="entry name" value="CELL WALL AMIDASE LYTH-RELATED"/>
    <property type="match status" value="1"/>
</dbReference>
<dbReference type="PANTHER" id="PTHR30404">
    <property type="entry name" value="N-ACETYLMURAMOYL-L-ALANINE AMIDASE"/>
    <property type="match status" value="1"/>
</dbReference>
<dbReference type="Pfam" id="PF01520">
    <property type="entry name" value="Amidase_3"/>
    <property type="match status" value="1"/>
</dbReference>
<dbReference type="Pfam" id="PF08239">
    <property type="entry name" value="SH3_3"/>
    <property type="match status" value="1"/>
</dbReference>
<dbReference type="PIRSF" id="PIRSF037730">
    <property type="entry name" value="CWA_LytH_prd"/>
    <property type="match status" value="1"/>
</dbReference>
<dbReference type="SMART" id="SM00646">
    <property type="entry name" value="Ami_3"/>
    <property type="match status" value="1"/>
</dbReference>
<dbReference type="SMART" id="SM00287">
    <property type="entry name" value="SH3b"/>
    <property type="match status" value="1"/>
</dbReference>
<dbReference type="SUPFAM" id="SSF53187">
    <property type="entry name" value="Zn-dependent exopeptidases"/>
    <property type="match status" value="1"/>
</dbReference>
<dbReference type="PROSITE" id="PS51781">
    <property type="entry name" value="SH3B"/>
    <property type="match status" value="1"/>
</dbReference>
<gene>
    <name type="primary">lytH</name>
    <name type="ordered locus">SAS1568</name>
</gene>
<proteinExistence type="inferred from homology"/>
<organism>
    <name type="scientific">Staphylococcus aureus (strain MSSA476)</name>
    <dbReference type="NCBI Taxonomy" id="282459"/>
    <lineage>
        <taxon>Bacteria</taxon>
        <taxon>Bacillati</taxon>
        <taxon>Bacillota</taxon>
        <taxon>Bacilli</taxon>
        <taxon>Bacillales</taxon>
        <taxon>Staphylococcaceae</taxon>
        <taxon>Staphylococcus</taxon>
    </lineage>
</organism>
<reference key="1">
    <citation type="journal article" date="2004" name="Proc. Natl. Acad. Sci. U.S.A.">
        <title>Complete genomes of two clinical Staphylococcus aureus strains: evidence for the rapid evolution of virulence and drug resistance.</title>
        <authorList>
            <person name="Holden M.T.G."/>
            <person name="Feil E.J."/>
            <person name="Lindsay J.A."/>
            <person name="Peacock S.J."/>
            <person name="Day N.P.J."/>
            <person name="Enright M.C."/>
            <person name="Foster T.J."/>
            <person name="Moore C.E."/>
            <person name="Hurst L."/>
            <person name="Atkin R."/>
            <person name="Barron A."/>
            <person name="Bason N."/>
            <person name="Bentley S.D."/>
            <person name="Chillingworth C."/>
            <person name="Chillingworth T."/>
            <person name="Churcher C."/>
            <person name="Clark L."/>
            <person name="Corton C."/>
            <person name="Cronin A."/>
            <person name="Doggett J."/>
            <person name="Dowd L."/>
            <person name="Feltwell T."/>
            <person name="Hance Z."/>
            <person name="Harris B."/>
            <person name="Hauser H."/>
            <person name="Holroyd S."/>
            <person name="Jagels K."/>
            <person name="James K.D."/>
            <person name="Lennard N."/>
            <person name="Line A."/>
            <person name="Mayes R."/>
            <person name="Moule S."/>
            <person name="Mungall K."/>
            <person name="Ormond D."/>
            <person name="Quail M.A."/>
            <person name="Rabbinowitsch E."/>
            <person name="Rutherford K.M."/>
            <person name="Sanders M."/>
            <person name="Sharp S."/>
            <person name="Simmonds M."/>
            <person name="Stevens K."/>
            <person name="Whitehead S."/>
            <person name="Barrell B.G."/>
            <person name="Spratt B.G."/>
            <person name="Parkhill J."/>
        </authorList>
    </citation>
    <scope>NUCLEOTIDE SEQUENCE [LARGE SCALE GENOMIC DNA]</scope>
    <source>
        <strain>MSSA476</strain>
    </source>
</reference>